<name>MURC_THESQ</name>
<reference key="1">
    <citation type="journal article" date="2011" name="J. Bacteriol.">
        <title>Genome sequence of Thermotoga sp. strain RQ2, a hyperthermophilic bacterium isolated from a geothermally heated region of the seafloor near Ribeira Quente, the Azores.</title>
        <authorList>
            <person name="Swithers K.S."/>
            <person name="DiPippo J.L."/>
            <person name="Bruce D.C."/>
            <person name="Detter C."/>
            <person name="Tapia R."/>
            <person name="Han S."/>
            <person name="Saunders E."/>
            <person name="Goodwin L.A."/>
            <person name="Han J."/>
            <person name="Woyke T."/>
            <person name="Pitluck S."/>
            <person name="Pennacchio L."/>
            <person name="Nolan M."/>
            <person name="Mikhailova N."/>
            <person name="Lykidis A."/>
            <person name="Land M.L."/>
            <person name="Brettin T."/>
            <person name="Stetter K.O."/>
            <person name="Nelson K.E."/>
            <person name="Gogarten J.P."/>
            <person name="Noll K.M."/>
        </authorList>
    </citation>
    <scope>NUCLEOTIDE SEQUENCE [LARGE SCALE GENOMIC DNA]</scope>
    <source>
        <strain>RQ2</strain>
    </source>
</reference>
<proteinExistence type="inferred from homology"/>
<accession>B1L9S2</accession>
<comment type="function">
    <text evidence="1">Cell wall formation.</text>
</comment>
<comment type="catalytic activity">
    <reaction evidence="1">
        <text>UDP-N-acetyl-alpha-D-muramate + L-alanine + ATP = UDP-N-acetyl-alpha-D-muramoyl-L-alanine + ADP + phosphate + H(+)</text>
        <dbReference type="Rhea" id="RHEA:23372"/>
        <dbReference type="ChEBI" id="CHEBI:15378"/>
        <dbReference type="ChEBI" id="CHEBI:30616"/>
        <dbReference type="ChEBI" id="CHEBI:43474"/>
        <dbReference type="ChEBI" id="CHEBI:57972"/>
        <dbReference type="ChEBI" id="CHEBI:70757"/>
        <dbReference type="ChEBI" id="CHEBI:83898"/>
        <dbReference type="ChEBI" id="CHEBI:456216"/>
        <dbReference type="EC" id="6.3.2.8"/>
    </reaction>
</comment>
<comment type="pathway">
    <text evidence="1">Cell wall biogenesis; peptidoglycan biosynthesis.</text>
</comment>
<comment type="subcellular location">
    <subcellularLocation>
        <location evidence="1">Cytoplasm</location>
    </subcellularLocation>
</comment>
<comment type="similarity">
    <text evidence="1">Belongs to the MurCDEF family.</text>
</comment>
<feature type="chain" id="PRO_1000091146" description="UDP-N-acetylmuramate--L-alanine ligase">
    <location>
        <begin position="1"/>
        <end position="457"/>
    </location>
</feature>
<feature type="binding site" evidence="1">
    <location>
        <begin position="109"/>
        <end position="115"/>
    </location>
    <ligand>
        <name>ATP</name>
        <dbReference type="ChEBI" id="CHEBI:30616"/>
    </ligand>
</feature>
<dbReference type="EC" id="6.3.2.8" evidence="1"/>
<dbReference type="EMBL" id="CP000969">
    <property type="protein sequence ID" value="ACB09070.1"/>
    <property type="molecule type" value="Genomic_DNA"/>
</dbReference>
<dbReference type="RefSeq" id="WP_012310701.1">
    <property type="nucleotide sequence ID" value="NC_010483.1"/>
</dbReference>
<dbReference type="SMR" id="B1L9S2"/>
<dbReference type="KEGG" id="trq:TRQ2_0717"/>
<dbReference type="HOGENOM" id="CLU_028104_2_2_0"/>
<dbReference type="UniPathway" id="UPA00219"/>
<dbReference type="Proteomes" id="UP000001687">
    <property type="component" value="Chromosome"/>
</dbReference>
<dbReference type="GO" id="GO:0005737">
    <property type="term" value="C:cytoplasm"/>
    <property type="evidence" value="ECO:0007669"/>
    <property type="project" value="UniProtKB-SubCell"/>
</dbReference>
<dbReference type="GO" id="GO:0005524">
    <property type="term" value="F:ATP binding"/>
    <property type="evidence" value="ECO:0007669"/>
    <property type="project" value="UniProtKB-UniRule"/>
</dbReference>
<dbReference type="GO" id="GO:0008763">
    <property type="term" value="F:UDP-N-acetylmuramate-L-alanine ligase activity"/>
    <property type="evidence" value="ECO:0007669"/>
    <property type="project" value="UniProtKB-UniRule"/>
</dbReference>
<dbReference type="GO" id="GO:0051301">
    <property type="term" value="P:cell division"/>
    <property type="evidence" value="ECO:0007669"/>
    <property type="project" value="UniProtKB-KW"/>
</dbReference>
<dbReference type="GO" id="GO:0071555">
    <property type="term" value="P:cell wall organization"/>
    <property type="evidence" value="ECO:0007669"/>
    <property type="project" value="UniProtKB-KW"/>
</dbReference>
<dbReference type="GO" id="GO:0009252">
    <property type="term" value="P:peptidoglycan biosynthetic process"/>
    <property type="evidence" value="ECO:0007669"/>
    <property type="project" value="UniProtKB-UniRule"/>
</dbReference>
<dbReference type="GO" id="GO:0008360">
    <property type="term" value="P:regulation of cell shape"/>
    <property type="evidence" value="ECO:0007669"/>
    <property type="project" value="UniProtKB-KW"/>
</dbReference>
<dbReference type="Gene3D" id="3.90.190.20">
    <property type="entry name" value="Mur ligase, C-terminal domain"/>
    <property type="match status" value="1"/>
</dbReference>
<dbReference type="Gene3D" id="3.40.1190.10">
    <property type="entry name" value="Mur-like, catalytic domain"/>
    <property type="match status" value="1"/>
</dbReference>
<dbReference type="Gene3D" id="3.40.50.720">
    <property type="entry name" value="NAD(P)-binding Rossmann-like Domain"/>
    <property type="match status" value="1"/>
</dbReference>
<dbReference type="HAMAP" id="MF_00046">
    <property type="entry name" value="MurC"/>
    <property type="match status" value="1"/>
</dbReference>
<dbReference type="InterPro" id="IPR036565">
    <property type="entry name" value="Mur-like_cat_sf"/>
</dbReference>
<dbReference type="InterPro" id="IPR004101">
    <property type="entry name" value="Mur_ligase_C"/>
</dbReference>
<dbReference type="InterPro" id="IPR036615">
    <property type="entry name" value="Mur_ligase_C_dom_sf"/>
</dbReference>
<dbReference type="InterPro" id="IPR013221">
    <property type="entry name" value="Mur_ligase_cen"/>
</dbReference>
<dbReference type="InterPro" id="IPR000713">
    <property type="entry name" value="Mur_ligase_N"/>
</dbReference>
<dbReference type="InterPro" id="IPR050061">
    <property type="entry name" value="MurCDEF_pg_biosynth"/>
</dbReference>
<dbReference type="InterPro" id="IPR005758">
    <property type="entry name" value="UDP-N-AcMur_Ala_ligase_MurC"/>
</dbReference>
<dbReference type="NCBIfam" id="TIGR01082">
    <property type="entry name" value="murC"/>
    <property type="match status" value="1"/>
</dbReference>
<dbReference type="PANTHER" id="PTHR43445:SF3">
    <property type="entry name" value="UDP-N-ACETYLMURAMATE--L-ALANINE LIGASE"/>
    <property type="match status" value="1"/>
</dbReference>
<dbReference type="PANTHER" id="PTHR43445">
    <property type="entry name" value="UDP-N-ACETYLMURAMATE--L-ALANINE LIGASE-RELATED"/>
    <property type="match status" value="1"/>
</dbReference>
<dbReference type="Pfam" id="PF01225">
    <property type="entry name" value="Mur_ligase"/>
    <property type="match status" value="1"/>
</dbReference>
<dbReference type="Pfam" id="PF02875">
    <property type="entry name" value="Mur_ligase_C"/>
    <property type="match status" value="1"/>
</dbReference>
<dbReference type="Pfam" id="PF08245">
    <property type="entry name" value="Mur_ligase_M"/>
    <property type="match status" value="1"/>
</dbReference>
<dbReference type="SUPFAM" id="SSF51984">
    <property type="entry name" value="MurCD N-terminal domain"/>
    <property type="match status" value="1"/>
</dbReference>
<dbReference type="SUPFAM" id="SSF53623">
    <property type="entry name" value="MurD-like peptide ligases, catalytic domain"/>
    <property type="match status" value="1"/>
</dbReference>
<dbReference type="SUPFAM" id="SSF53244">
    <property type="entry name" value="MurD-like peptide ligases, peptide-binding domain"/>
    <property type="match status" value="1"/>
</dbReference>
<sequence length="457" mass="51832">MKIHFVGIGGIGMSAVALHEFLNGNDVYGSNIEETERTAYLRKLGIPIFVPHSADNWYDPDLVIKTPAVRDDNPEIVRARMERVPIENRLHYFRDILKREKKEEFAVTGTDGKTTTTAMVAHVLKHLKKSPTVFLGGIMDSLEHGNYEKGNGPVVYELDESEEFFSEFSPNYLIITNARGDHLENYGNSLSRYRSAFEKISRNTDLVVTFAEDELTSHLGDVTFGVKKGTYTLEMRSASRAEQKAVVEKNGKRYLELKLKVPGFHNVLNALAVIALFDSLGYDLAPVLEALEEFRGVHRRFSIAFHDPETNIYVIDDYAHTPDEIRNLLQTAKEVFENEKIVVIFQPHRYSRLEREDGNFAKALQLADEVVVTEVYDAFEEKKNGVSGKMIWDSLKSLGKEAYFVEKLPELEKVIPVSENTVFLFVGAGDIIYSSRRFVERYQSSKSSPSRVLGSNK</sequence>
<protein>
    <recommendedName>
        <fullName evidence="1">UDP-N-acetylmuramate--L-alanine ligase</fullName>
        <ecNumber evidence="1">6.3.2.8</ecNumber>
    </recommendedName>
    <alternativeName>
        <fullName evidence="1">UDP-N-acetylmuramoyl-L-alanine synthetase</fullName>
    </alternativeName>
</protein>
<gene>
    <name evidence="1" type="primary">murC</name>
    <name type="ordered locus">TRQ2_0717</name>
</gene>
<evidence type="ECO:0000255" key="1">
    <source>
        <dbReference type="HAMAP-Rule" id="MF_00046"/>
    </source>
</evidence>
<keyword id="KW-0067">ATP-binding</keyword>
<keyword id="KW-0131">Cell cycle</keyword>
<keyword id="KW-0132">Cell division</keyword>
<keyword id="KW-0133">Cell shape</keyword>
<keyword id="KW-0961">Cell wall biogenesis/degradation</keyword>
<keyword id="KW-0963">Cytoplasm</keyword>
<keyword id="KW-0436">Ligase</keyword>
<keyword id="KW-0547">Nucleotide-binding</keyword>
<keyword id="KW-0573">Peptidoglycan synthesis</keyword>
<organism>
    <name type="scientific">Thermotoga sp. (strain RQ2)</name>
    <dbReference type="NCBI Taxonomy" id="126740"/>
    <lineage>
        <taxon>Bacteria</taxon>
        <taxon>Thermotogati</taxon>
        <taxon>Thermotogota</taxon>
        <taxon>Thermotogae</taxon>
        <taxon>Thermotogales</taxon>
        <taxon>Thermotogaceae</taxon>
        <taxon>Thermotoga</taxon>
    </lineage>
</organism>